<organism>
    <name type="scientific">Arthrobacter sp. (strain FB24)</name>
    <dbReference type="NCBI Taxonomy" id="290399"/>
    <lineage>
        <taxon>Bacteria</taxon>
        <taxon>Bacillati</taxon>
        <taxon>Actinomycetota</taxon>
        <taxon>Actinomycetes</taxon>
        <taxon>Micrococcales</taxon>
        <taxon>Micrococcaceae</taxon>
        <taxon>Arthrobacter</taxon>
    </lineage>
</organism>
<proteinExistence type="inferred from homology"/>
<accession>A0JYC5</accession>
<name>RF2_ARTS2</name>
<comment type="function">
    <text evidence="1">Peptide chain release factor 2 directs the termination of translation in response to the peptide chain termination codons UGA and UAA.</text>
</comment>
<comment type="subcellular location">
    <subcellularLocation>
        <location evidence="1">Cytoplasm</location>
    </subcellularLocation>
</comment>
<comment type="PTM">
    <text evidence="1">Methylated by PrmC. Methylation increases the termination efficiency of RF2.</text>
</comment>
<comment type="similarity">
    <text evidence="1">Belongs to the prokaryotic/mitochondrial release factor family.</text>
</comment>
<reference key="1">
    <citation type="journal article" date="2013" name="Stand. Genomic Sci.">
        <title>Complete genome sequence of Arthrobacter sp. strain FB24.</title>
        <authorList>
            <person name="Nakatsu C.H."/>
            <person name="Barabote R."/>
            <person name="Thompson S."/>
            <person name="Bruce D."/>
            <person name="Detter C."/>
            <person name="Brettin T."/>
            <person name="Han C."/>
            <person name="Beasley F."/>
            <person name="Chen W."/>
            <person name="Konopka A."/>
            <person name="Xie G."/>
        </authorList>
    </citation>
    <scope>NUCLEOTIDE SEQUENCE [LARGE SCALE GENOMIC DNA]</scope>
    <source>
        <strain>FB24</strain>
    </source>
</reference>
<dbReference type="EMBL" id="CP000454">
    <property type="protein sequence ID" value="ABK04045.1"/>
    <property type="molecule type" value="Genomic_DNA"/>
</dbReference>
<dbReference type="RefSeq" id="WP_011692507.1">
    <property type="nucleotide sequence ID" value="NC_008541.1"/>
</dbReference>
<dbReference type="SMR" id="A0JYC5"/>
<dbReference type="STRING" id="290399.Arth_2666"/>
<dbReference type="KEGG" id="art:Arth_2666"/>
<dbReference type="eggNOG" id="COG1186">
    <property type="taxonomic scope" value="Bacteria"/>
</dbReference>
<dbReference type="HOGENOM" id="CLU_036856_6_0_11"/>
<dbReference type="OrthoDB" id="9806673at2"/>
<dbReference type="Proteomes" id="UP000000754">
    <property type="component" value="Chromosome"/>
</dbReference>
<dbReference type="GO" id="GO:0005737">
    <property type="term" value="C:cytoplasm"/>
    <property type="evidence" value="ECO:0007669"/>
    <property type="project" value="UniProtKB-SubCell"/>
</dbReference>
<dbReference type="GO" id="GO:0016149">
    <property type="term" value="F:translation release factor activity, codon specific"/>
    <property type="evidence" value="ECO:0007669"/>
    <property type="project" value="UniProtKB-UniRule"/>
</dbReference>
<dbReference type="FunFam" id="3.30.160.20:FF:000004">
    <property type="entry name" value="Peptide chain release factor 1"/>
    <property type="match status" value="1"/>
</dbReference>
<dbReference type="Gene3D" id="3.30.160.20">
    <property type="match status" value="1"/>
</dbReference>
<dbReference type="Gene3D" id="3.30.70.1660">
    <property type="match status" value="1"/>
</dbReference>
<dbReference type="Gene3D" id="1.20.58.410">
    <property type="entry name" value="Release factor"/>
    <property type="match status" value="1"/>
</dbReference>
<dbReference type="HAMAP" id="MF_00094">
    <property type="entry name" value="Rel_fac_2"/>
    <property type="match status" value="1"/>
</dbReference>
<dbReference type="InterPro" id="IPR005139">
    <property type="entry name" value="PCRF"/>
</dbReference>
<dbReference type="InterPro" id="IPR000352">
    <property type="entry name" value="Pep_chain_release_fac_I"/>
</dbReference>
<dbReference type="InterPro" id="IPR045853">
    <property type="entry name" value="Pep_chain_release_fac_I_sf"/>
</dbReference>
<dbReference type="InterPro" id="IPR004374">
    <property type="entry name" value="PrfB"/>
</dbReference>
<dbReference type="NCBIfam" id="TIGR00020">
    <property type="entry name" value="prfB"/>
    <property type="match status" value="1"/>
</dbReference>
<dbReference type="PANTHER" id="PTHR43116:SF3">
    <property type="entry name" value="CLASS I PEPTIDE CHAIN RELEASE FACTOR"/>
    <property type="match status" value="1"/>
</dbReference>
<dbReference type="PANTHER" id="PTHR43116">
    <property type="entry name" value="PEPTIDE CHAIN RELEASE FACTOR 2"/>
    <property type="match status" value="1"/>
</dbReference>
<dbReference type="Pfam" id="PF03462">
    <property type="entry name" value="PCRF"/>
    <property type="match status" value="1"/>
</dbReference>
<dbReference type="Pfam" id="PF00472">
    <property type="entry name" value="RF-1"/>
    <property type="match status" value="1"/>
</dbReference>
<dbReference type="SMART" id="SM00937">
    <property type="entry name" value="PCRF"/>
    <property type="match status" value="1"/>
</dbReference>
<dbReference type="SUPFAM" id="SSF75620">
    <property type="entry name" value="Release factor"/>
    <property type="match status" value="1"/>
</dbReference>
<dbReference type="PROSITE" id="PS00745">
    <property type="entry name" value="RF_PROK_I"/>
    <property type="match status" value="1"/>
</dbReference>
<protein>
    <recommendedName>
        <fullName evidence="1">Peptide chain release factor 2</fullName>
        <shortName evidence="1">RF-2</shortName>
    </recommendedName>
</protein>
<gene>
    <name evidence="1" type="primary">prfB</name>
    <name type="ordered locus">Arth_2666</name>
</gene>
<evidence type="ECO:0000255" key="1">
    <source>
        <dbReference type="HAMAP-Rule" id="MF_00094"/>
    </source>
</evidence>
<feature type="chain" id="PRO_1000093532" description="Peptide chain release factor 2">
    <location>
        <begin position="1"/>
        <end position="371"/>
    </location>
</feature>
<feature type="modified residue" description="N5-methylglutamine" evidence="1">
    <location>
        <position position="251"/>
    </location>
</feature>
<sequence>MAQIDFSAEIRALRATYSSIENVSNVEELKEDIAELSERAGEPNLWDDPAAAQKITSRLSHRQSELERLNTLVSRIDDLEVLVELGQDEDDADSMGEAAAELESIRKSLKDLEVVTLLSGEFDEREAVVTIRAGAGGVDAADFAEMLLRMYLRWAERHGYPTTIMDTSYAEEAGLKSATFEVNAPYAYGTLSVEAGTHRLVRISPFDNQGRRQTSFAAVEVIPLIEQTDSIDIPDNEIRVDVFRSSGPGGQSVNTTDSAVRLTHIPTGTVVSMQNEKSQLQNRAAALRVLQSRLLLLKKEQEDAEKKAFAGDVKASWGDQMRSYVLNPYQMVKDLRTEHEVGNTSAVFDGEIDDFIDAGIRWRTDNRNAAN</sequence>
<keyword id="KW-0963">Cytoplasm</keyword>
<keyword id="KW-0488">Methylation</keyword>
<keyword id="KW-0648">Protein biosynthesis</keyword>
<keyword id="KW-1185">Reference proteome</keyword>